<comment type="function">
    <text evidence="5">Catalyzes the removal of elemental sulfur from cysteine to produce alanine. It supplies the inorganic sulfur for iron-sulfur (Fe-S) clusters in mitosomes.</text>
</comment>
<comment type="catalytic activity">
    <reaction evidence="4">
        <text>(sulfur carrier)-H + L-cysteine = (sulfur carrier)-SH + L-alanine</text>
        <dbReference type="Rhea" id="RHEA:43892"/>
        <dbReference type="Rhea" id="RHEA-COMP:14737"/>
        <dbReference type="Rhea" id="RHEA-COMP:14739"/>
        <dbReference type="ChEBI" id="CHEBI:29917"/>
        <dbReference type="ChEBI" id="CHEBI:35235"/>
        <dbReference type="ChEBI" id="CHEBI:57972"/>
        <dbReference type="ChEBI" id="CHEBI:64428"/>
        <dbReference type="EC" id="2.8.1.7"/>
    </reaction>
</comment>
<comment type="cofactor">
    <cofactor evidence="3">
        <name>pyridoxal 5'-phosphate</name>
        <dbReference type="ChEBI" id="CHEBI:597326"/>
    </cofactor>
</comment>
<comment type="subunit">
    <text evidence="5">Interacts with ISD11.</text>
</comment>
<comment type="subcellular location">
    <subcellularLocation>
        <location evidence="5">Mitosome</location>
    </subcellularLocation>
</comment>
<comment type="similarity">
    <text evidence="6">Belongs to the class-V pyridoxal-phosphate-dependent aminotransferase family. NifS/IscS subfamily.</text>
</comment>
<protein>
    <recommendedName>
        <fullName evidence="4">Cysteine desulfurase, mitosomal</fullName>
        <ecNumber evidence="4">2.8.1.7</ecNumber>
    </recommendedName>
</protein>
<organism>
    <name type="scientific">Trachipleistophora hominis</name>
    <name type="common">Microsporidian parasite</name>
    <dbReference type="NCBI Taxonomy" id="72359"/>
    <lineage>
        <taxon>Eukaryota</taxon>
        <taxon>Fungi</taxon>
        <taxon>Fungi incertae sedis</taxon>
        <taxon>Microsporidia</taxon>
        <taxon>Pleistophoridae</taxon>
        <taxon>Trachipleistophora</taxon>
    </lineage>
</organism>
<sequence>MPLPNQIATSNVETKNFASLKRSDEPIAIAQASRTPAKIYFDFQATTPVDPRVLDAMLPYFTKKYGNPHSRTHSFGWESEKAVETARKQVADLIGAHEKEIIFTSGATESNNLAIKGAVDWKAQDGNPVHVITTQVEHKCVLDSMRFLEEKGARVTYMKVNKDGVIDLEELKRSISDDTVLVSIMGVNNEIGTVQPLEEIGKICKERNVLFHCDAAQMFGKLKIDVNKMNIDLLSISGHKIYGPKGVGALYVRRRPRVRLVPLFSGGGQERGLRSGTLPTPLIVGLGKAAAVCQEEMQRDLSWIESLSKKLYTCLKENIPNVIKNGSLQTNPLRWFPGCLNLSFPHVEGEGLLMALKNIALSSGSACTSASLEPSYVLRALGNDDELAHSSIRFGIGRFTTPCEIKEVAKQTTSAVKKLRDMSPLYEMEQEGIDLKTIKWT</sequence>
<accession>B0YLW6</accession>
<accession>L7JZX4</accession>
<name>NFS1_TRAHO</name>
<reference key="1">
    <citation type="journal article" date="2008" name="Nature">
        <title>Localization and functionality of microsporidian iron-sulphur cluster assembly proteins.</title>
        <authorList>
            <person name="Goldberg A.V."/>
            <person name="Molik S."/>
            <person name="Tsaousis A.D."/>
            <person name="Neumann K."/>
            <person name="Kuhnke G."/>
            <person name="Delbac F."/>
            <person name="Vivares C.P."/>
            <person name="Hirt R.P."/>
            <person name="Lill R."/>
            <person name="Embley T.M."/>
        </authorList>
    </citation>
    <scope>NUCLEOTIDE SEQUENCE [GENOMIC DNA]</scope>
    <scope>SUBCELLULAR LOCATION</scope>
    <scope>FUNCTION</scope>
    <scope>INTERACTION WITH ISD11</scope>
</reference>
<reference key="2">
    <citation type="journal article" date="2012" name="PLoS Pathog.">
        <title>The genome of the obligate intracellular parasite Trachipleistophora hominis: new insights into microsporidian genome dynamics and reductive evolution.</title>
        <authorList>
            <person name="Heinz E."/>
            <person name="Williams T.A."/>
            <person name="Nakjang S."/>
            <person name="Noel C.J."/>
            <person name="Swan D.C."/>
            <person name="Goldberg A.V."/>
            <person name="Harris S.R."/>
            <person name="Weinmaier T."/>
            <person name="Markert S."/>
            <person name="Becher D."/>
            <person name="Bernhardt J."/>
            <person name="Dagan T."/>
            <person name="Hacker C."/>
            <person name="Lucocq J.M."/>
            <person name="Schweder T."/>
            <person name="Rattei T."/>
            <person name="Hall N."/>
            <person name="Hirt R.P."/>
            <person name="Embley T.M."/>
        </authorList>
    </citation>
    <scope>NUCLEOTIDE SEQUENCE [LARGE SCALE GENOMIC DNA]</scope>
</reference>
<keyword id="KW-0408">Iron</keyword>
<keyword id="KW-0411">Iron-sulfur</keyword>
<keyword id="KW-0479">Metal-binding</keyword>
<keyword id="KW-1025">Mitosome</keyword>
<keyword id="KW-0663">Pyridoxal phosphate</keyword>
<keyword id="KW-1185">Reference proteome</keyword>
<keyword id="KW-0808">Transferase</keyword>
<evidence type="ECO:0000250" key="1">
    <source>
        <dbReference type="UniProtKB" id="O29689"/>
    </source>
</evidence>
<evidence type="ECO:0000250" key="2">
    <source>
        <dbReference type="UniProtKB" id="P0A6B7"/>
    </source>
</evidence>
<evidence type="ECO:0000250" key="3">
    <source>
        <dbReference type="UniProtKB" id="P0A6B9"/>
    </source>
</evidence>
<evidence type="ECO:0000250" key="4">
    <source>
        <dbReference type="UniProtKB" id="P25374"/>
    </source>
</evidence>
<evidence type="ECO:0000269" key="5">
    <source>
    </source>
</evidence>
<evidence type="ECO:0000305" key="6"/>
<feature type="chain" id="PRO_0000382929" description="Cysteine desulfurase, mitosomal">
    <location>
        <begin position="1"/>
        <end position="441"/>
    </location>
</feature>
<feature type="active site" description="Cysteine persulfide intermediate" evidence="2">
    <location>
        <position position="367"/>
    </location>
</feature>
<feature type="binding site" evidence="3">
    <location>
        <begin position="107"/>
        <end position="108"/>
    </location>
    <ligand>
        <name>pyridoxal 5'-phosphate</name>
        <dbReference type="ChEBI" id="CHEBI:597326"/>
    </ligand>
</feature>
<feature type="binding site" evidence="1">
    <location>
        <position position="189"/>
    </location>
    <ligand>
        <name>pyridoxal 5'-phosphate</name>
        <dbReference type="ChEBI" id="CHEBI:597326"/>
    </ligand>
</feature>
<feature type="binding site" evidence="3">
    <location>
        <position position="217"/>
    </location>
    <ligand>
        <name>pyridoxal 5'-phosphate</name>
        <dbReference type="ChEBI" id="CHEBI:597326"/>
    </ligand>
</feature>
<feature type="binding site" evidence="3">
    <location>
        <begin position="237"/>
        <end position="239"/>
    </location>
    <ligand>
        <name>pyridoxal 5'-phosphate</name>
        <dbReference type="ChEBI" id="CHEBI:597326"/>
    </ligand>
</feature>
<feature type="binding site" evidence="3">
    <location>
        <position position="277"/>
    </location>
    <ligand>
        <name>pyridoxal 5'-phosphate</name>
        <dbReference type="ChEBI" id="CHEBI:597326"/>
    </ligand>
</feature>
<feature type="binding site" description="via persulfide group" evidence="1">
    <location>
        <position position="367"/>
    </location>
    <ligand>
        <name>[2Fe-2S] cluster</name>
        <dbReference type="ChEBI" id="CHEBI:190135"/>
    </ligand>
</feature>
<feature type="modified residue" description="N6-(pyridoxal phosphate)lysine" evidence="3">
    <location>
        <position position="240"/>
    </location>
</feature>
<proteinExistence type="evidence at protein level"/>
<dbReference type="EC" id="2.8.1.7" evidence="4"/>
<dbReference type="EMBL" id="EF571313">
    <property type="protein sequence ID" value="ABS58597.1"/>
    <property type="molecule type" value="Genomic_DNA"/>
</dbReference>
<dbReference type="EMBL" id="JH993832">
    <property type="protein sequence ID" value="ELQ76591.1"/>
    <property type="molecule type" value="Genomic_DNA"/>
</dbReference>
<dbReference type="SMR" id="B0YLW6"/>
<dbReference type="FunCoup" id="B0YLW6">
    <property type="interactions" value="155"/>
</dbReference>
<dbReference type="STRING" id="72359.B0YLW6"/>
<dbReference type="VEuPathDB" id="MicrosporidiaDB:THOM_0306"/>
<dbReference type="HOGENOM" id="CLU_003433_0_2_1"/>
<dbReference type="InParanoid" id="B0YLW6"/>
<dbReference type="OMA" id="KGLYWAR"/>
<dbReference type="OrthoDB" id="10250117at2759"/>
<dbReference type="Proteomes" id="UP000011185">
    <property type="component" value="Unassembled WGS sequence"/>
</dbReference>
<dbReference type="GO" id="GO:1990221">
    <property type="term" value="C:L-cysteine desulfurase complex"/>
    <property type="evidence" value="ECO:0007669"/>
    <property type="project" value="EnsemblFungi"/>
</dbReference>
<dbReference type="GO" id="GO:0005739">
    <property type="term" value="C:mitochondrion"/>
    <property type="evidence" value="ECO:0007669"/>
    <property type="project" value="EnsemblFungi"/>
</dbReference>
<dbReference type="GO" id="GO:0032047">
    <property type="term" value="C:mitosome"/>
    <property type="evidence" value="ECO:0007669"/>
    <property type="project" value="UniProtKB-SubCell"/>
</dbReference>
<dbReference type="GO" id="GO:0005634">
    <property type="term" value="C:nucleus"/>
    <property type="evidence" value="ECO:0007669"/>
    <property type="project" value="EnsemblFungi"/>
</dbReference>
<dbReference type="GO" id="GO:0031071">
    <property type="term" value="F:cysteine desulfurase activity"/>
    <property type="evidence" value="ECO:0007669"/>
    <property type="project" value="UniProtKB-EC"/>
</dbReference>
<dbReference type="GO" id="GO:0051536">
    <property type="term" value="F:iron-sulfur cluster binding"/>
    <property type="evidence" value="ECO:0007669"/>
    <property type="project" value="UniProtKB-KW"/>
</dbReference>
<dbReference type="GO" id="GO:0046872">
    <property type="term" value="F:metal ion binding"/>
    <property type="evidence" value="ECO:0007669"/>
    <property type="project" value="UniProtKB-KW"/>
</dbReference>
<dbReference type="GO" id="GO:0030170">
    <property type="term" value="F:pyridoxal phosphate binding"/>
    <property type="evidence" value="ECO:0007669"/>
    <property type="project" value="InterPro"/>
</dbReference>
<dbReference type="GO" id="GO:0044571">
    <property type="term" value="P:[2Fe-2S] cluster assembly"/>
    <property type="evidence" value="ECO:0007669"/>
    <property type="project" value="InterPro"/>
</dbReference>
<dbReference type="GO" id="GO:0006879">
    <property type="term" value="P:intracellular iron ion homeostasis"/>
    <property type="evidence" value="ECO:0007669"/>
    <property type="project" value="EnsemblFungi"/>
</dbReference>
<dbReference type="GO" id="GO:0070903">
    <property type="term" value="P:mitochondrial tRNA thio-modification"/>
    <property type="evidence" value="ECO:0007669"/>
    <property type="project" value="EnsemblFungi"/>
</dbReference>
<dbReference type="GO" id="GO:0002143">
    <property type="term" value="P:tRNA wobble position uridine thiolation"/>
    <property type="evidence" value="ECO:0007669"/>
    <property type="project" value="EnsemblFungi"/>
</dbReference>
<dbReference type="FunFam" id="3.40.640.10:FF:000003">
    <property type="entry name" value="Cysteine desulfurase IscS"/>
    <property type="match status" value="1"/>
</dbReference>
<dbReference type="Gene3D" id="3.90.1150.10">
    <property type="entry name" value="Aspartate Aminotransferase, domain 1"/>
    <property type="match status" value="1"/>
</dbReference>
<dbReference type="Gene3D" id="3.40.640.10">
    <property type="entry name" value="Type I PLP-dependent aspartate aminotransferase-like (Major domain)"/>
    <property type="match status" value="1"/>
</dbReference>
<dbReference type="HAMAP" id="MF_00331">
    <property type="entry name" value="Cys_desulf_IscS"/>
    <property type="match status" value="1"/>
</dbReference>
<dbReference type="InterPro" id="IPR000192">
    <property type="entry name" value="Aminotrans_V_dom"/>
</dbReference>
<dbReference type="InterPro" id="IPR020578">
    <property type="entry name" value="Aminotrans_V_PyrdxlP_BS"/>
</dbReference>
<dbReference type="InterPro" id="IPR010240">
    <property type="entry name" value="Cys_deSase_IscS"/>
</dbReference>
<dbReference type="InterPro" id="IPR016454">
    <property type="entry name" value="Cysteine_dSase"/>
</dbReference>
<dbReference type="InterPro" id="IPR015424">
    <property type="entry name" value="PyrdxlP-dep_Trfase"/>
</dbReference>
<dbReference type="InterPro" id="IPR015421">
    <property type="entry name" value="PyrdxlP-dep_Trfase_major"/>
</dbReference>
<dbReference type="InterPro" id="IPR015422">
    <property type="entry name" value="PyrdxlP-dep_Trfase_small"/>
</dbReference>
<dbReference type="NCBIfam" id="NF010611">
    <property type="entry name" value="PRK14012.1"/>
    <property type="match status" value="1"/>
</dbReference>
<dbReference type="PANTHER" id="PTHR11601:SF34">
    <property type="entry name" value="CYSTEINE DESULFURASE"/>
    <property type="match status" value="1"/>
</dbReference>
<dbReference type="PANTHER" id="PTHR11601">
    <property type="entry name" value="CYSTEINE DESULFURYLASE FAMILY MEMBER"/>
    <property type="match status" value="1"/>
</dbReference>
<dbReference type="Pfam" id="PF00266">
    <property type="entry name" value="Aminotran_5"/>
    <property type="match status" value="1"/>
</dbReference>
<dbReference type="PIRSF" id="PIRSF005572">
    <property type="entry name" value="NifS"/>
    <property type="match status" value="1"/>
</dbReference>
<dbReference type="SUPFAM" id="SSF53383">
    <property type="entry name" value="PLP-dependent transferases"/>
    <property type="match status" value="1"/>
</dbReference>
<dbReference type="PROSITE" id="PS00595">
    <property type="entry name" value="AA_TRANSFER_CLASS_5"/>
    <property type="match status" value="1"/>
</dbReference>
<gene>
    <name evidence="4" type="primary">NFS1</name>
    <name type="ORF">THOM_0306</name>
</gene>